<protein>
    <recommendedName>
        <fullName evidence="1">UvrABC system protein C</fullName>
        <shortName evidence="1">Protein UvrC</shortName>
    </recommendedName>
    <alternativeName>
        <fullName evidence="1">Excinuclease ABC subunit C</fullName>
    </alternativeName>
</protein>
<dbReference type="EMBL" id="AE016823">
    <property type="protein sequence ID" value="AAS70345.1"/>
    <property type="molecule type" value="Genomic_DNA"/>
</dbReference>
<dbReference type="RefSeq" id="WP_001114131.1">
    <property type="nucleotide sequence ID" value="NC_005823.1"/>
</dbReference>
<dbReference type="SMR" id="Q72RI9"/>
<dbReference type="GeneID" id="61141655"/>
<dbReference type="KEGG" id="lic:LIC_11756"/>
<dbReference type="HOGENOM" id="CLU_014841_3_2_12"/>
<dbReference type="Proteomes" id="UP000007037">
    <property type="component" value="Chromosome I"/>
</dbReference>
<dbReference type="GO" id="GO:0005737">
    <property type="term" value="C:cytoplasm"/>
    <property type="evidence" value="ECO:0007669"/>
    <property type="project" value="UniProtKB-SubCell"/>
</dbReference>
<dbReference type="GO" id="GO:0009380">
    <property type="term" value="C:excinuclease repair complex"/>
    <property type="evidence" value="ECO:0007669"/>
    <property type="project" value="InterPro"/>
</dbReference>
<dbReference type="GO" id="GO:0003677">
    <property type="term" value="F:DNA binding"/>
    <property type="evidence" value="ECO:0007669"/>
    <property type="project" value="UniProtKB-UniRule"/>
</dbReference>
<dbReference type="GO" id="GO:0009381">
    <property type="term" value="F:excinuclease ABC activity"/>
    <property type="evidence" value="ECO:0007669"/>
    <property type="project" value="UniProtKB-UniRule"/>
</dbReference>
<dbReference type="GO" id="GO:0006289">
    <property type="term" value="P:nucleotide-excision repair"/>
    <property type="evidence" value="ECO:0007669"/>
    <property type="project" value="UniProtKB-UniRule"/>
</dbReference>
<dbReference type="GO" id="GO:0009432">
    <property type="term" value="P:SOS response"/>
    <property type="evidence" value="ECO:0007669"/>
    <property type="project" value="UniProtKB-UniRule"/>
</dbReference>
<dbReference type="CDD" id="cd10434">
    <property type="entry name" value="GIY-YIG_UvrC_Cho"/>
    <property type="match status" value="1"/>
</dbReference>
<dbReference type="FunFam" id="3.30.420.340:FF:000006">
    <property type="entry name" value="UvrABC system protein C"/>
    <property type="match status" value="1"/>
</dbReference>
<dbReference type="FunFam" id="3.40.1440.10:FF:000001">
    <property type="entry name" value="UvrABC system protein C"/>
    <property type="match status" value="1"/>
</dbReference>
<dbReference type="Gene3D" id="1.10.150.20">
    <property type="entry name" value="5' to 3' exonuclease, C-terminal subdomain"/>
    <property type="match status" value="1"/>
</dbReference>
<dbReference type="Gene3D" id="3.40.1440.10">
    <property type="entry name" value="GIY-YIG endonuclease"/>
    <property type="match status" value="1"/>
</dbReference>
<dbReference type="Gene3D" id="4.10.860.10">
    <property type="entry name" value="UVR domain"/>
    <property type="match status" value="1"/>
</dbReference>
<dbReference type="Gene3D" id="3.30.420.340">
    <property type="entry name" value="UvrC, RNAse H endonuclease domain"/>
    <property type="match status" value="1"/>
</dbReference>
<dbReference type="HAMAP" id="MF_00203">
    <property type="entry name" value="UvrC"/>
    <property type="match status" value="1"/>
</dbReference>
<dbReference type="InterPro" id="IPR000305">
    <property type="entry name" value="GIY-YIG_endonuc"/>
</dbReference>
<dbReference type="InterPro" id="IPR035901">
    <property type="entry name" value="GIY-YIG_endonuc_sf"/>
</dbReference>
<dbReference type="InterPro" id="IPR047296">
    <property type="entry name" value="GIY-YIG_UvrC_Cho"/>
</dbReference>
<dbReference type="InterPro" id="IPR003583">
    <property type="entry name" value="Hlx-hairpin-Hlx_DNA-bd_motif"/>
</dbReference>
<dbReference type="InterPro" id="IPR010994">
    <property type="entry name" value="RuvA_2-like"/>
</dbReference>
<dbReference type="InterPro" id="IPR001943">
    <property type="entry name" value="UVR_dom"/>
</dbReference>
<dbReference type="InterPro" id="IPR036876">
    <property type="entry name" value="UVR_dom_sf"/>
</dbReference>
<dbReference type="InterPro" id="IPR050066">
    <property type="entry name" value="UvrABC_protein_C"/>
</dbReference>
<dbReference type="InterPro" id="IPR004791">
    <property type="entry name" value="UvrC"/>
</dbReference>
<dbReference type="InterPro" id="IPR001162">
    <property type="entry name" value="UvrC_RNase_H_dom"/>
</dbReference>
<dbReference type="InterPro" id="IPR038476">
    <property type="entry name" value="UvrC_RNase_H_dom_sf"/>
</dbReference>
<dbReference type="NCBIfam" id="NF001824">
    <property type="entry name" value="PRK00558.1-5"/>
    <property type="match status" value="1"/>
</dbReference>
<dbReference type="NCBIfam" id="TIGR00194">
    <property type="entry name" value="uvrC"/>
    <property type="match status" value="1"/>
</dbReference>
<dbReference type="PANTHER" id="PTHR30562:SF1">
    <property type="entry name" value="UVRABC SYSTEM PROTEIN C"/>
    <property type="match status" value="1"/>
</dbReference>
<dbReference type="PANTHER" id="PTHR30562">
    <property type="entry name" value="UVRC/OXIDOREDUCTASE"/>
    <property type="match status" value="1"/>
</dbReference>
<dbReference type="Pfam" id="PF01541">
    <property type="entry name" value="GIY-YIG"/>
    <property type="match status" value="1"/>
</dbReference>
<dbReference type="Pfam" id="PF14520">
    <property type="entry name" value="HHH_5"/>
    <property type="match status" value="1"/>
</dbReference>
<dbReference type="Pfam" id="PF02151">
    <property type="entry name" value="UVR"/>
    <property type="match status" value="1"/>
</dbReference>
<dbReference type="Pfam" id="PF22920">
    <property type="entry name" value="UvrC_RNaseH"/>
    <property type="match status" value="1"/>
</dbReference>
<dbReference type="Pfam" id="PF08459">
    <property type="entry name" value="UvrC_RNaseH_dom"/>
    <property type="match status" value="1"/>
</dbReference>
<dbReference type="SMART" id="SM00465">
    <property type="entry name" value="GIYc"/>
    <property type="match status" value="1"/>
</dbReference>
<dbReference type="SMART" id="SM00278">
    <property type="entry name" value="HhH1"/>
    <property type="match status" value="2"/>
</dbReference>
<dbReference type="SUPFAM" id="SSF46600">
    <property type="entry name" value="C-terminal UvrC-binding domain of UvrB"/>
    <property type="match status" value="1"/>
</dbReference>
<dbReference type="SUPFAM" id="SSF82771">
    <property type="entry name" value="GIY-YIG endonuclease"/>
    <property type="match status" value="1"/>
</dbReference>
<dbReference type="SUPFAM" id="SSF47781">
    <property type="entry name" value="RuvA domain 2-like"/>
    <property type="match status" value="1"/>
</dbReference>
<dbReference type="PROSITE" id="PS50164">
    <property type="entry name" value="GIY_YIG"/>
    <property type="match status" value="1"/>
</dbReference>
<dbReference type="PROSITE" id="PS50151">
    <property type="entry name" value="UVR"/>
    <property type="match status" value="1"/>
</dbReference>
<dbReference type="PROSITE" id="PS50165">
    <property type="entry name" value="UVRC"/>
    <property type="match status" value="1"/>
</dbReference>
<name>UVRC_LEPIC</name>
<accession>Q72RI9</accession>
<sequence>MPEILNHTLILEKIKNLGASPGCYLWKSKKGEVLYVGKAKNLDKRVRSYLKENHPDVKTKVLQREIFDLDWIATGTEKEALILEATLIKKHNPRFNVRLKDDKKYPYICVSLSEPYPMVYVTRKLKDNGDRYFGPYSDVKSTRETLDIILRIFPVRKTRQVLPLPRPRRPCLNFDMGRCLGPCQGNIPVEDYKVIIDQVIQFLEGRKESLVSDLNIKMSNASERLDFEKAARYRDMLQRIQNFREKQTVVSLEGGDEDVIGFARKQDEGQVILLEIRGGRLETKKSFPIQGVLDAENSEILGAFFRDYYLNASLVPPCIFIPADIQDEVIPVIDVLQEKTGFRPKIKFPKGGDKRSLLKIAEKNAELGLSERLLATHYRDQTASLKEIQEMFSLERLPHIIECYDISHFQGSQPVASGVMFVEGKPFKQGYRKYNIRGYEGINDPGMIHEVISRRLQRIINEEGVFPDLIVIDGGLTQLTKACEAAVEAGAEGIPMVGLAKKREEIFFPGENEPFIFDMNSPGMKLLRHLRDEAHRFGVSHHRSRRNKETMRSLIQEVPDIGFKRSKLLLQHFSGEKKIEEATKEELLLVPGIGENLAEKILKQLQKKE</sequence>
<evidence type="ECO:0000255" key="1">
    <source>
        <dbReference type="HAMAP-Rule" id="MF_00203"/>
    </source>
</evidence>
<keyword id="KW-0963">Cytoplasm</keyword>
<keyword id="KW-0227">DNA damage</keyword>
<keyword id="KW-0228">DNA excision</keyword>
<keyword id="KW-0234">DNA repair</keyword>
<keyword id="KW-0267">Excision nuclease</keyword>
<keyword id="KW-0742">SOS response</keyword>
<proteinExistence type="inferred from homology"/>
<gene>
    <name evidence="1" type="primary">uvrC</name>
    <name type="ordered locus">LIC_11756</name>
</gene>
<comment type="function">
    <text evidence="1">The UvrABC repair system catalyzes the recognition and processing of DNA lesions. UvrC both incises the 5' and 3' sides of the lesion. The N-terminal half is responsible for the 3' incision and the C-terminal half is responsible for the 5' incision.</text>
</comment>
<comment type="subunit">
    <text evidence="1">Interacts with UvrB in an incision complex.</text>
</comment>
<comment type="subcellular location">
    <subcellularLocation>
        <location evidence="1">Cytoplasm</location>
    </subcellularLocation>
</comment>
<comment type="similarity">
    <text evidence="1">Belongs to the UvrC family.</text>
</comment>
<reference key="1">
    <citation type="journal article" date="2004" name="J. Bacteriol.">
        <title>Comparative genomics of two Leptospira interrogans serovars reveals novel insights into physiology and pathogenesis.</title>
        <authorList>
            <person name="Nascimento A.L.T.O."/>
            <person name="Ko A.I."/>
            <person name="Martins E.A.L."/>
            <person name="Monteiro-Vitorello C.B."/>
            <person name="Ho P.L."/>
            <person name="Haake D.A."/>
            <person name="Verjovski-Almeida S."/>
            <person name="Hartskeerl R.A."/>
            <person name="Marques M.V."/>
            <person name="Oliveira M.C."/>
            <person name="Menck C.F.M."/>
            <person name="Leite L.C.C."/>
            <person name="Carrer H."/>
            <person name="Coutinho L.L."/>
            <person name="Degrave W.M."/>
            <person name="Dellagostin O.A."/>
            <person name="El-Dorry H."/>
            <person name="Ferro E.S."/>
            <person name="Ferro M.I.T."/>
            <person name="Furlan L.R."/>
            <person name="Gamberini M."/>
            <person name="Giglioti E.A."/>
            <person name="Goes-Neto A."/>
            <person name="Goldman G.H."/>
            <person name="Goldman M.H.S."/>
            <person name="Harakava R."/>
            <person name="Jeronimo S.M.B."/>
            <person name="Junqueira-de-Azevedo I.L.M."/>
            <person name="Kimura E.T."/>
            <person name="Kuramae E.E."/>
            <person name="Lemos E.G.M."/>
            <person name="Lemos M.V.F."/>
            <person name="Marino C.L."/>
            <person name="Nunes L.R."/>
            <person name="de Oliveira R.C."/>
            <person name="Pereira G.G."/>
            <person name="Reis M.S."/>
            <person name="Schriefer A."/>
            <person name="Siqueira W.J."/>
            <person name="Sommer P."/>
            <person name="Tsai S.M."/>
            <person name="Simpson A.J.G."/>
            <person name="Ferro J.A."/>
            <person name="Camargo L.E.A."/>
            <person name="Kitajima J.P."/>
            <person name="Setubal J.C."/>
            <person name="Van Sluys M.A."/>
        </authorList>
    </citation>
    <scope>NUCLEOTIDE SEQUENCE [LARGE SCALE GENOMIC DNA]</scope>
    <source>
        <strain>Fiocruz L1-130</strain>
    </source>
</reference>
<organism>
    <name type="scientific">Leptospira interrogans serogroup Icterohaemorrhagiae serovar copenhageni (strain Fiocruz L1-130)</name>
    <dbReference type="NCBI Taxonomy" id="267671"/>
    <lineage>
        <taxon>Bacteria</taxon>
        <taxon>Pseudomonadati</taxon>
        <taxon>Spirochaetota</taxon>
        <taxon>Spirochaetia</taxon>
        <taxon>Leptospirales</taxon>
        <taxon>Leptospiraceae</taxon>
        <taxon>Leptospira</taxon>
    </lineage>
</organism>
<feature type="chain" id="PRO_0000138310" description="UvrABC system protein C">
    <location>
        <begin position="1"/>
        <end position="609"/>
    </location>
</feature>
<feature type="domain" description="GIY-YIG" evidence="1">
    <location>
        <begin position="19"/>
        <end position="97"/>
    </location>
</feature>
<feature type="domain" description="UVR" evidence="1">
    <location>
        <begin position="208"/>
        <end position="243"/>
    </location>
</feature>